<feature type="chain" id="PRO_0000309425" description="UPF0502 protein Sfri_1696">
    <location>
        <begin position="1"/>
        <end position="217"/>
    </location>
</feature>
<proteinExistence type="inferred from homology"/>
<reference key="1">
    <citation type="submission" date="2006-08" db="EMBL/GenBank/DDBJ databases">
        <title>Complete sequence of Shewanella frigidimarina NCIMB 400.</title>
        <authorList>
            <consortium name="US DOE Joint Genome Institute"/>
            <person name="Copeland A."/>
            <person name="Lucas S."/>
            <person name="Lapidus A."/>
            <person name="Barry K."/>
            <person name="Detter J.C."/>
            <person name="Glavina del Rio T."/>
            <person name="Hammon N."/>
            <person name="Israni S."/>
            <person name="Dalin E."/>
            <person name="Tice H."/>
            <person name="Pitluck S."/>
            <person name="Fredrickson J.K."/>
            <person name="Kolker E."/>
            <person name="McCuel L.A."/>
            <person name="DiChristina T."/>
            <person name="Nealson K.H."/>
            <person name="Newman D."/>
            <person name="Tiedje J.M."/>
            <person name="Zhou J."/>
            <person name="Romine M.F."/>
            <person name="Culley D.E."/>
            <person name="Serres M."/>
            <person name="Chertkov O."/>
            <person name="Brettin T."/>
            <person name="Bruce D."/>
            <person name="Han C."/>
            <person name="Tapia R."/>
            <person name="Gilna P."/>
            <person name="Schmutz J."/>
            <person name="Larimer F."/>
            <person name="Land M."/>
            <person name="Hauser L."/>
            <person name="Kyrpides N."/>
            <person name="Mikhailova N."/>
            <person name="Richardson P."/>
        </authorList>
    </citation>
    <scope>NUCLEOTIDE SEQUENCE [LARGE SCALE GENOMIC DNA]</scope>
    <source>
        <strain>NCIMB 400</strain>
    </source>
</reference>
<dbReference type="EMBL" id="CP000447">
    <property type="protein sequence ID" value="ABI71547.1"/>
    <property type="molecule type" value="Genomic_DNA"/>
</dbReference>
<dbReference type="RefSeq" id="WP_011637163.1">
    <property type="nucleotide sequence ID" value="NC_008345.1"/>
</dbReference>
<dbReference type="SMR" id="Q083L8"/>
<dbReference type="STRING" id="318167.Sfri_1696"/>
<dbReference type="KEGG" id="sfr:Sfri_1696"/>
<dbReference type="eggNOG" id="COG3132">
    <property type="taxonomic scope" value="Bacteria"/>
</dbReference>
<dbReference type="HOGENOM" id="CLU_057831_2_0_6"/>
<dbReference type="OrthoDB" id="9784785at2"/>
<dbReference type="Proteomes" id="UP000000684">
    <property type="component" value="Chromosome"/>
</dbReference>
<dbReference type="Gene3D" id="1.10.10.10">
    <property type="entry name" value="Winged helix-like DNA-binding domain superfamily/Winged helix DNA-binding domain"/>
    <property type="match status" value="2"/>
</dbReference>
<dbReference type="HAMAP" id="MF_01584">
    <property type="entry name" value="UPF0502"/>
    <property type="match status" value="1"/>
</dbReference>
<dbReference type="InterPro" id="IPR007432">
    <property type="entry name" value="DUF480"/>
</dbReference>
<dbReference type="InterPro" id="IPR036388">
    <property type="entry name" value="WH-like_DNA-bd_sf"/>
</dbReference>
<dbReference type="InterPro" id="IPR036390">
    <property type="entry name" value="WH_DNA-bd_sf"/>
</dbReference>
<dbReference type="PANTHER" id="PTHR38768">
    <property type="entry name" value="UPF0502 PROTEIN YCEH"/>
    <property type="match status" value="1"/>
</dbReference>
<dbReference type="PANTHER" id="PTHR38768:SF1">
    <property type="entry name" value="UPF0502 PROTEIN YCEH"/>
    <property type="match status" value="1"/>
</dbReference>
<dbReference type="Pfam" id="PF04337">
    <property type="entry name" value="DUF480"/>
    <property type="match status" value="1"/>
</dbReference>
<dbReference type="SUPFAM" id="SSF46785">
    <property type="entry name" value="Winged helix' DNA-binding domain"/>
    <property type="match status" value="2"/>
</dbReference>
<evidence type="ECO:0000255" key="1">
    <source>
        <dbReference type="HAMAP-Rule" id="MF_01584"/>
    </source>
</evidence>
<gene>
    <name type="ordered locus">Sfri_1696</name>
</gene>
<keyword id="KW-1185">Reference proteome</keyword>
<protein>
    <recommendedName>
        <fullName evidence="1">UPF0502 protein Sfri_1696</fullName>
    </recommendedName>
</protein>
<name>Y1696_SHEFN</name>
<sequence length="217" mass="24390">MELTSLEARVIGCLLEKELTTPDQYPLSLNSLALACNQKSSREPVLSLSESQVKTVLDDLTKKRLLSEQSGFGSRVVKYKHRFCNTEFSELQLSSAEVAIICVLLLRGPQTPGELKTRTNRLHEFADVSQVETALLALSQREKPLVVQLAREANKRDCRFLECFSGNVDDYDVNSSDAIVVSNHTQQTLQQDSKIVELEQRVKLLEQKLAQLESLLN</sequence>
<accession>Q083L8</accession>
<comment type="similarity">
    <text evidence="1">Belongs to the UPF0502 family.</text>
</comment>
<organism>
    <name type="scientific">Shewanella frigidimarina (strain NCIMB 400)</name>
    <dbReference type="NCBI Taxonomy" id="318167"/>
    <lineage>
        <taxon>Bacteria</taxon>
        <taxon>Pseudomonadati</taxon>
        <taxon>Pseudomonadota</taxon>
        <taxon>Gammaproteobacteria</taxon>
        <taxon>Alteromonadales</taxon>
        <taxon>Shewanellaceae</taxon>
        <taxon>Shewanella</taxon>
    </lineage>
</organism>